<comment type="function">
    <text evidence="1">Catalyzes the oxidation of 3-carboxy-2-hydroxy-4-methylpentanoate (3-isopropylmalate) to 3-carboxy-4-methyl-2-oxopentanoate. The product decarboxylates to 4-methyl-2 oxopentanoate.</text>
</comment>
<comment type="catalytic activity">
    <reaction evidence="1">
        <text>(2R,3S)-3-isopropylmalate + NAD(+) = 4-methyl-2-oxopentanoate + CO2 + NADH</text>
        <dbReference type="Rhea" id="RHEA:32271"/>
        <dbReference type="ChEBI" id="CHEBI:16526"/>
        <dbReference type="ChEBI" id="CHEBI:17865"/>
        <dbReference type="ChEBI" id="CHEBI:35121"/>
        <dbReference type="ChEBI" id="CHEBI:57540"/>
        <dbReference type="ChEBI" id="CHEBI:57945"/>
        <dbReference type="EC" id="1.1.1.85"/>
    </reaction>
</comment>
<comment type="cofactor">
    <cofactor evidence="1">
        <name>Mg(2+)</name>
        <dbReference type="ChEBI" id="CHEBI:18420"/>
    </cofactor>
    <cofactor evidence="1">
        <name>Mn(2+)</name>
        <dbReference type="ChEBI" id="CHEBI:29035"/>
    </cofactor>
    <text evidence="1">Binds 1 Mg(2+) or Mn(2+) ion per subunit.</text>
</comment>
<comment type="pathway">
    <text evidence="1">Amino-acid biosynthesis; L-leucine biosynthesis; L-leucine from 3-methyl-2-oxobutanoate: step 3/4.</text>
</comment>
<comment type="subunit">
    <text evidence="1">Homodimer.</text>
</comment>
<comment type="subcellular location">
    <subcellularLocation>
        <location evidence="1">Cytoplasm</location>
    </subcellularLocation>
</comment>
<comment type="similarity">
    <text evidence="1">Belongs to the isocitrate and isopropylmalate dehydrogenases family. LeuB type 1 subfamily.</text>
</comment>
<dbReference type="EC" id="1.1.1.85" evidence="1"/>
<dbReference type="EMBL" id="AF041837">
    <property type="protein sequence ID" value="AAD12601.1"/>
    <property type="molecule type" value="Genomic_DNA"/>
</dbReference>
<dbReference type="RefSeq" id="NP_047188.1">
    <property type="nucleotide sequence ID" value="NC_001911.1"/>
</dbReference>
<dbReference type="SMR" id="O85071"/>
<dbReference type="UniPathway" id="UPA00048">
    <property type="reaction ID" value="UER00072"/>
</dbReference>
<dbReference type="GO" id="GO:0005829">
    <property type="term" value="C:cytosol"/>
    <property type="evidence" value="ECO:0007669"/>
    <property type="project" value="TreeGrafter"/>
</dbReference>
<dbReference type="GO" id="GO:0003862">
    <property type="term" value="F:3-isopropylmalate dehydrogenase activity"/>
    <property type="evidence" value="ECO:0007669"/>
    <property type="project" value="UniProtKB-UniRule"/>
</dbReference>
<dbReference type="GO" id="GO:0000287">
    <property type="term" value="F:magnesium ion binding"/>
    <property type="evidence" value="ECO:0007669"/>
    <property type="project" value="InterPro"/>
</dbReference>
<dbReference type="GO" id="GO:0051287">
    <property type="term" value="F:NAD binding"/>
    <property type="evidence" value="ECO:0007669"/>
    <property type="project" value="InterPro"/>
</dbReference>
<dbReference type="GO" id="GO:0009098">
    <property type="term" value="P:L-leucine biosynthetic process"/>
    <property type="evidence" value="ECO:0007669"/>
    <property type="project" value="UniProtKB-UniRule"/>
</dbReference>
<dbReference type="FunFam" id="3.40.718.10:FF:000006">
    <property type="entry name" value="3-isopropylmalate dehydrogenase"/>
    <property type="match status" value="1"/>
</dbReference>
<dbReference type="Gene3D" id="3.40.718.10">
    <property type="entry name" value="Isopropylmalate Dehydrogenase"/>
    <property type="match status" value="1"/>
</dbReference>
<dbReference type="HAMAP" id="MF_01033">
    <property type="entry name" value="LeuB_type1"/>
    <property type="match status" value="1"/>
</dbReference>
<dbReference type="InterPro" id="IPR019818">
    <property type="entry name" value="IsoCit/isopropylmalate_DH_CS"/>
</dbReference>
<dbReference type="InterPro" id="IPR024084">
    <property type="entry name" value="IsoPropMal-DH-like_dom"/>
</dbReference>
<dbReference type="InterPro" id="IPR004429">
    <property type="entry name" value="Isopropylmalate_DH"/>
</dbReference>
<dbReference type="NCBIfam" id="TIGR00169">
    <property type="entry name" value="leuB"/>
    <property type="match status" value="1"/>
</dbReference>
<dbReference type="PANTHER" id="PTHR42979">
    <property type="entry name" value="3-ISOPROPYLMALATE DEHYDROGENASE"/>
    <property type="match status" value="1"/>
</dbReference>
<dbReference type="PANTHER" id="PTHR42979:SF1">
    <property type="entry name" value="3-ISOPROPYLMALATE DEHYDROGENASE"/>
    <property type="match status" value="1"/>
</dbReference>
<dbReference type="Pfam" id="PF00180">
    <property type="entry name" value="Iso_dh"/>
    <property type="match status" value="1"/>
</dbReference>
<dbReference type="SMART" id="SM01329">
    <property type="entry name" value="Iso_dh"/>
    <property type="match status" value="1"/>
</dbReference>
<dbReference type="SUPFAM" id="SSF53659">
    <property type="entry name" value="Isocitrate/Isopropylmalate dehydrogenase-like"/>
    <property type="match status" value="1"/>
</dbReference>
<dbReference type="PROSITE" id="PS00470">
    <property type="entry name" value="IDH_IMDH"/>
    <property type="match status" value="1"/>
</dbReference>
<sequence length="363" mass="41056">MHKQYHIAVLPGDGIGPEVMQEAYKILQVLREHFSLFIKTKEFDIGGIAIDNHGIALPKKTLIGCENSDAILLGSIGGKKWDTLPINERPERASLLPLRKHFNFFCNLRPSNLYKELNFLSPLRNDIVKHGFDILCVRELTGGIYFGKPRGRVTKKKLMYAFDTEIYYKFEIVRIAHLAFKLARSRKHKLCSIDKANVLESSILWREVVEEVSKEYPDVILSHLYIDNVCMQIIKDPNQFDVLLCSNLFGDIISDECAMITGSIGMLPSASLNEKNFGLYEPAGGSAPDIQGKNIANPIAQILSLSMLIRYSMNLNKIANKIDNAVINVLKKGYKTMDISKDQNYLKTNEMGDVIADFLKRDK</sequence>
<evidence type="ECO:0000255" key="1">
    <source>
        <dbReference type="HAMAP-Rule" id="MF_01033"/>
    </source>
</evidence>
<proteinExistence type="inferred from homology"/>
<name>LEU3_BUCDN</name>
<accession>O85071</accession>
<organism>
    <name type="scientific">Buchnera aphidicola subsp. Diuraphis noxia</name>
    <dbReference type="NCBI Taxonomy" id="118101"/>
    <lineage>
        <taxon>Bacteria</taxon>
        <taxon>Pseudomonadati</taxon>
        <taxon>Pseudomonadota</taxon>
        <taxon>Gammaproteobacteria</taxon>
        <taxon>Enterobacterales</taxon>
        <taxon>Erwiniaceae</taxon>
        <taxon>Buchnera</taxon>
    </lineage>
</organism>
<gene>
    <name evidence="1" type="primary">leuB</name>
</gene>
<keyword id="KW-0028">Amino-acid biosynthesis</keyword>
<keyword id="KW-0100">Branched-chain amino acid biosynthesis</keyword>
<keyword id="KW-0963">Cytoplasm</keyword>
<keyword id="KW-0432">Leucine biosynthesis</keyword>
<keyword id="KW-0460">Magnesium</keyword>
<keyword id="KW-0464">Manganese</keyword>
<keyword id="KW-0479">Metal-binding</keyword>
<keyword id="KW-0520">NAD</keyword>
<keyword id="KW-0560">Oxidoreductase</keyword>
<keyword id="KW-0614">Plasmid</keyword>
<feature type="chain" id="PRO_0000083657" description="3-isopropylmalate dehydrogenase">
    <location>
        <begin position="1"/>
        <end position="363"/>
    </location>
</feature>
<feature type="binding site" evidence="1">
    <location>
        <begin position="78"/>
        <end position="91"/>
    </location>
    <ligand>
        <name>NAD(+)</name>
        <dbReference type="ChEBI" id="CHEBI:57540"/>
    </ligand>
</feature>
<feature type="binding site" evidence="1">
    <location>
        <position position="99"/>
    </location>
    <ligand>
        <name>substrate</name>
    </ligand>
</feature>
<feature type="binding site" evidence="1">
    <location>
        <position position="109"/>
    </location>
    <ligand>
        <name>substrate</name>
    </ligand>
</feature>
<feature type="binding site" evidence="1">
    <location>
        <position position="138"/>
    </location>
    <ligand>
        <name>substrate</name>
    </ligand>
</feature>
<feature type="binding site" evidence="1">
    <location>
        <position position="227"/>
    </location>
    <ligand>
        <name>Mg(2+)</name>
        <dbReference type="ChEBI" id="CHEBI:18420"/>
    </ligand>
</feature>
<feature type="binding site" evidence="1">
    <location>
        <position position="227"/>
    </location>
    <ligand>
        <name>substrate</name>
    </ligand>
</feature>
<feature type="binding site" evidence="1">
    <location>
        <position position="251"/>
    </location>
    <ligand>
        <name>Mg(2+)</name>
        <dbReference type="ChEBI" id="CHEBI:18420"/>
    </ligand>
</feature>
<feature type="binding site" evidence="1">
    <location>
        <position position="255"/>
    </location>
    <ligand>
        <name>Mg(2+)</name>
        <dbReference type="ChEBI" id="CHEBI:18420"/>
    </ligand>
</feature>
<feature type="binding site" evidence="1">
    <location>
        <begin position="285"/>
        <end position="297"/>
    </location>
    <ligand>
        <name>NAD(+)</name>
        <dbReference type="ChEBI" id="CHEBI:57540"/>
    </ligand>
</feature>
<feature type="site" description="Important for catalysis" evidence="1">
    <location>
        <position position="145"/>
    </location>
</feature>
<feature type="site" description="Important for catalysis" evidence="1">
    <location>
        <position position="195"/>
    </location>
</feature>
<geneLocation type="plasmid">
    <name>pLeu-Dn</name>
    <name>pBDn1</name>
</geneLocation>
<reference key="1">
    <citation type="journal article" date="1999" name="J. Mol. Evol.">
        <title>Genetic characterization of plasmids containing genes encoding enzymes of leucine biosynthesis in endosymbionts (Buchnera) of aphids.</title>
        <authorList>
            <person name="Baumann L."/>
            <person name="Baumann P."/>
            <person name="Moran N.A."/>
            <person name="Sandstroem J.P."/>
            <person name="Thao M.L."/>
        </authorList>
    </citation>
    <scope>NUCLEOTIDE SEQUENCE [GENOMIC DNA]</scope>
</reference>
<protein>
    <recommendedName>
        <fullName evidence="1">3-isopropylmalate dehydrogenase</fullName>
        <ecNumber evidence="1">1.1.1.85</ecNumber>
    </recommendedName>
    <alternativeName>
        <fullName evidence="1">3-IPM-DH</fullName>
    </alternativeName>
    <alternativeName>
        <fullName evidence="1">Beta-IPM dehydrogenase</fullName>
        <shortName evidence="1">IMDH</shortName>
    </alternativeName>
</protein>